<sequence>MNTPVSVNEKKDFVKWFLNNYQLKQRECVWILNYLMSHDQLMHKVHFVEHAKYCPRGLVMSANCVKDTPFHFFKQNVMTTDAEKSFHDIRLNRDEDIYIQLNFKSSFQNANYVAVLEENPYLPKHIEVNEKDRLLAERFLEESVFSFRRERLLKQIDEALDKQDKEAFHRLTAELKML</sequence>
<gene>
    <name type="ordered locus">BAA_1610</name>
</gene>
<comment type="similarity">
    <text evidence="1">Belongs to the UPF0302 family.</text>
</comment>
<feature type="chain" id="PRO_1000148405" description="UPF0302 protein BAA_1610">
    <location>
        <begin position="1"/>
        <end position="178"/>
    </location>
</feature>
<proteinExistence type="inferred from homology"/>
<accession>C3P5A7</accession>
<organism>
    <name type="scientific">Bacillus anthracis (strain A0248)</name>
    <dbReference type="NCBI Taxonomy" id="592021"/>
    <lineage>
        <taxon>Bacteria</taxon>
        <taxon>Bacillati</taxon>
        <taxon>Bacillota</taxon>
        <taxon>Bacilli</taxon>
        <taxon>Bacillales</taxon>
        <taxon>Bacillaceae</taxon>
        <taxon>Bacillus</taxon>
        <taxon>Bacillus cereus group</taxon>
    </lineage>
</organism>
<reference key="1">
    <citation type="submission" date="2009-04" db="EMBL/GenBank/DDBJ databases">
        <title>Genome sequence of Bacillus anthracis A0248.</title>
        <authorList>
            <person name="Dodson R.J."/>
            <person name="Munk A.C."/>
            <person name="Bruce D."/>
            <person name="Detter C."/>
            <person name="Tapia R."/>
            <person name="Sutton G."/>
            <person name="Sims D."/>
            <person name="Brettin T."/>
        </authorList>
    </citation>
    <scope>NUCLEOTIDE SEQUENCE [LARGE SCALE GENOMIC DNA]</scope>
    <source>
        <strain>A0248</strain>
    </source>
</reference>
<protein>
    <recommendedName>
        <fullName evidence="1">UPF0302 protein BAA_1610</fullName>
    </recommendedName>
</protein>
<dbReference type="EMBL" id="CP001598">
    <property type="protein sequence ID" value="ACQ50483.1"/>
    <property type="molecule type" value="Genomic_DNA"/>
</dbReference>
<dbReference type="RefSeq" id="WP_001095923.1">
    <property type="nucleotide sequence ID" value="NC_012659.1"/>
</dbReference>
<dbReference type="SMR" id="C3P5A7"/>
<dbReference type="KEGG" id="bai:BAA_1610"/>
<dbReference type="HOGENOM" id="CLU_126019_0_0_9"/>
<dbReference type="Gene3D" id="3.40.1530.30">
    <property type="entry name" value="Uncharacterised family UPF0302, N-terminal domain"/>
    <property type="match status" value="1"/>
</dbReference>
<dbReference type="Gene3D" id="4.10.810.10">
    <property type="entry name" value="Virus Scaffolding Protein, Chain A"/>
    <property type="match status" value="1"/>
</dbReference>
<dbReference type="HAMAP" id="MF_00760">
    <property type="entry name" value="UPF0302"/>
    <property type="match status" value="1"/>
</dbReference>
<dbReference type="InterPro" id="IPR014957">
    <property type="entry name" value="IDEAL_dom"/>
</dbReference>
<dbReference type="InterPro" id="IPR011188">
    <property type="entry name" value="UPF0302"/>
</dbReference>
<dbReference type="InterPro" id="IPR014963">
    <property type="entry name" value="UPF0302_N"/>
</dbReference>
<dbReference type="InterPro" id="IPR038091">
    <property type="entry name" value="UPF0302_N_sf"/>
</dbReference>
<dbReference type="InterPro" id="IPR027393">
    <property type="entry name" value="Virus_scaffolding_prot_C"/>
</dbReference>
<dbReference type="NCBIfam" id="NF002965">
    <property type="entry name" value="PRK03636.1"/>
    <property type="match status" value="1"/>
</dbReference>
<dbReference type="Pfam" id="PF08858">
    <property type="entry name" value="IDEAL"/>
    <property type="match status" value="1"/>
</dbReference>
<dbReference type="Pfam" id="PF08864">
    <property type="entry name" value="UPF0302"/>
    <property type="match status" value="1"/>
</dbReference>
<dbReference type="PIRSF" id="PIRSF007165">
    <property type="entry name" value="UCP007165"/>
    <property type="match status" value="1"/>
</dbReference>
<dbReference type="SMART" id="SM00914">
    <property type="entry name" value="IDEAL"/>
    <property type="match status" value="1"/>
</dbReference>
<evidence type="ECO:0000255" key="1">
    <source>
        <dbReference type="HAMAP-Rule" id="MF_00760"/>
    </source>
</evidence>
<name>Y1610_BACAA</name>